<name>NADD_BACAC</name>
<evidence type="ECO:0000255" key="1">
    <source>
        <dbReference type="HAMAP-Rule" id="MF_00244"/>
    </source>
</evidence>
<evidence type="ECO:0007829" key="2">
    <source>
        <dbReference type="PDB" id="2QTR"/>
    </source>
</evidence>
<evidence type="ECO:0007829" key="3">
    <source>
        <dbReference type="PDB" id="3MLA"/>
    </source>
</evidence>
<comment type="function">
    <text evidence="1">Catalyzes the reversible adenylation of nicotinate mononucleotide (NaMN) to nicotinic acid adenine dinucleotide (NaAD).</text>
</comment>
<comment type="catalytic activity">
    <reaction evidence="1">
        <text>nicotinate beta-D-ribonucleotide + ATP + H(+) = deamido-NAD(+) + diphosphate</text>
        <dbReference type="Rhea" id="RHEA:22860"/>
        <dbReference type="ChEBI" id="CHEBI:15378"/>
        <dbReference type="ChEBI" id="CHEBI:30616"/>
        <dbReference type="ChEBI" id="CHEBI:33019"/>
        <dbReference type="ChEBI" id="CHEBI:57502"/>
        <dbReference type="ChEBI" id="CHEBI:58437"/>
        <dbReference type="EC" id="2.7.7.18"/>
    </reaction>
</comment>
<comment type="pathway">
    <text evidence="1">Cofactor biosynthesis; NAD(+) biosynthesis; deamido-NAD(+) from nicotinate D-ribonucleotide: step 1/1.</text>
</comment>
<comment type="similarity">
    <text evidence="1">Belongs to the NadD family.</text>
</comment>
<reference key="1">
    <citation type="submission" date="2008-10" db="EMBL/GenBank/DDBJ databases">
        <title>Genome sequence of Bacillus anthracis str. CDC 684.</title>
        <authorList>
            <person name="Dodson R.J."/>
            <person name="Munk A.C."/>
            <person name="Brettin T."/>
            <person name="Bruce D."/>
            <person name="Detter C."/>
            <person name="Tapia R."/>
            <person name="Han C."/>
            <person name="Sutton G."/>
            <person name="Sims D."/>
        </authorList>
    </citation>
    <scope>NUCLEOTIDE SEQUENCE [LARGE SCALE GENOMIC DNA]</scope>
    <source>
        <strain>CDC 684 / NRRL 3495</strain>
    </source>
</reference>
<keyword id="KW-0002">3D-structure</keyword>
<keyword id="KW-0067">ATP-binding</keyword>
<keyword id="KW-0520">NAD</keyword>
<keyword id="KW-0547">Nucleotide-binding</keyword>
<keyword id="KW-0548">Nucleotidyltransferase</keyword>
<keyword id="KW-0662">Pyridine nucleotide biosynthesis</keyword>
<keyword id="KW-0808">Transferase</keyword>
<dbReference type="EC" id="2.7.7.18" evidence="1"/>
<dbReference type="EMBL" id="CP001215">
    <property type="protein sequence ID" value="ACP12849.1"/>
    <property type="molecule type" value="Genomic_DNA"/>
</dbReference>
<dbReference type="RefSeq" id="WP_001226053.1">
    <property type="nucleotide sequence ID" value="NC_012581.1"/>
</dbReference>
<dbReference type="PDB" id="2QTR">
    <property type="method" value="X-ray"/>
    <property type="resolution" value="1.70 A"/>
    <property type="chains" value="A/B/C=1-189"/>
</dbReference>
<dbReference type="PDB" id="3MLA">
    <property type="method" value="X-ray"/>
    <property type="resolution" value="1.75 A"/>
    <property type="chains" value="A/B=1-189"/>
</dbReference>
<dbReference type="PDB" id="3MLB">
    <property type="method" value="X-ray"/>
    <property type="resolution" value="1.80 A"/>
    <property type="chains" value="A/B=1-189"/>
</dbReference>
<dbReference type="PDB" id="3MMX">
    <property type="method" value="X-ray"/>
    <property type="resolution" value="2.55 A"/>
    <property type="chains" value="A/B/C/D/E/F/G/H=1-189"/>
</dbReference>
<dbReference type="PDBsum" id="2QTR"/>
<dbReference type="PDBsum" id="3MLA"/>
<dbReference type="PDBsum" id="3MLB"/>
<dbReference type="PDBsum" id="3MMX"/>
<dbReference type="SMR" id="C3L5T6"/>
<dbReference type="BindingDB" id="C3L5T6"/>
<dbReference type="ChEMBL" id="CHEMBL1075320"/>
<dbReference type="KEGG" id="bah:BAMEG_4595"/>
<dbReference type="HOGENOM" id="CLU_069765_3_1_9"/>
<dbReference type="BRENDA" id="2.7.7.18">
    <property type="organism ID" value="634"/>
</dbReference>
<dbReference type="UniPathway" id="UPA00253">
    <property type="reaction ID" value="UER00332"/>
</dbReference>
<dbReference type="EvolutionaryTrace" id="C3L5T6"/>
<dbReference type="PRO" id="PR:C3L5T6"/>
<dbReference type="GO" id="GO:0005524">
    <property type="term" value="F:ATP binding"/>
    <property type="evidence" value="ECO:0007669"/>
    <property type="project" value="UniProtKB-KW"/>
</dbReference>
<dbReference type="GO" id="GO:0004515">
    <property type="term" value="F:nicotinate-nucleotide adenylyltransferase activity"/>
    <property type="evidence" value="ECO:0007669"/>
    <property type="project" value="UniProtKB-UniRule"/>
</dbReference>
<dbReference type="GO" id="GO:0009435">
    <property type="term" value="P:NAD biosynthetic process"/>
    <property type="evidence" value="ECO:0007669"/>
    <property type="project" value="UniProtKB-UniRule"/>
</dbReference>
<dbReference type="CDD" id="cd02165">
    <property type="entry name" value="NMNAT"/>
    <property type="match status" value="1"/>
</dbReference>
<dbReference type="FunFam" id="3.40.50.620:FF:000079">
    <property type="entry name" value="Probable nicotinate-nucleotide adenylyltransferase"/>
    <property type="match status" value="1"/>
</dbReference>
<dbReference type="Gene3D" id="3.40.50.620">
    <property type="entry name" value="HUPs"/>
    <property type="match status" value="1"/>
</dbReference>
<dbReference type="HAMAP" id="MF_00244">
    <property type="entry name" value="NaMN_adenylyltr"/>
    <property type="match status" value="1"/>
</dbReference>
<dbReference type="InterPro" id="IPR004821">
    <property type="entry name" value="Cyt_trans-like"/>
</dbReference>
<dbReference type="InterPro" id="IPR005248">
    <property type="entry name" value="NadD/NMNAT"/>
</dbReference>
<dbReference type="InterPro" id="IPR014729">
    <property type="entry name" value="Rossmann-like_a/b/a_fold"/>
</dbReference>
<dbReference type="NCBIfam" id="TIGR00125">
    <property type="entry name" value="cyt_tran_rel"/>
    <property type="match status" value="1"/>
</dbReference>
<dbReference type="NCBIfam" id="TIGR00482">
    <property type="entry name" value="nicotinate (nicotinamide) nucleotide adenylyltransferase"/>
    <property type="match status" value="1"/>
</dbReference>
<dbReference type="NCBIfam" id="NF000840">
    <property type="entry name" value="PRK00071.1-3"/>
    <property type="match status" value="1"/>
</dbReference>
<dbReference type="NCBIfam" id="NF000841">
    <property type="entry name" value="PRK00071.1-4"/>
    <property type="match status" value="1"/>
</dbReference>
<dbReference type="PANTHER" id="PTHR39321">
    <property type="entry name" value="NICOTINATE-NUCLEOTIDE ADENYLYLTRANSFERASE-RELATED"/>
    <property type="match status" value="1"/>
</dbReference>
<dbReference type="PANTHER" id="PTHR39321:SF3">
    <property type="entry name" value="PHOSPHOPANTETHEINE ADENYLYLTRANSFERASE"/>
    <property type="match status" value="1"/>
</dbReference>
<dbReference type="Pfam" id="PF01467">
    <property type="entry name" value="CTP_transf_like"/>
    <property type="match status" value="1"/>
</dbReference>
<dbReference type="SUPFAM" id="SSF52374">
    <property type="entry name" value="Nucleotidylyl transferase"/>
    <property type="match status" value="1"/>
</dbReference>
<organism>
    <name type="scientific">Bacillus anthracis (strain CDC 684 / NRRL 3495)</name>
    <dbReference type="NCBI Taxonomy" id="568206"/>
    <lineage>
        <taxon>Bacteria</taxon>
        <taxon>Bacillati</taxon>
        <taxon>Bacillota</taxon>
        <taxon>Bacilli</taxon>
        <taxon>Bacillales</taxon>
        <taxon>Bacillaceae</taxon>
        <taxon>Bacillus</taxon>
        <taxon>Bacillus cereus group</taxon>
    </lineage>
</organism>
<gene>
    <name evidence="1" type="primary">nadD</name>
    <name type="ordered locus">BAMEG_4595</name>
</gene>
<proteinExistence type="evidence at protein level"/>
<feature type="chain" id="PRO_1000125337" description="Probable nicotinate-nucleotide adenylyltransferase">
    <location>
        <begin position="1"/>
        <end position="189"/>
    </location>
</feature>
<feature type="strand" evidence="2">
    <location>
        <begin position="3"/>
        <end position="9"/>
    </location>
</feature>
<feature type="helix" evidence="2">
    <location>
        <begin position="16"/>
        <end position="19"/>
    </location>
</feature>
<feature type="helix" evidence="2">
    <location>
        <begin position="23"/>
        <end position="28"/>
    </location>
</feature>
<feature type="strand" evidence="2">
    <location>
        <begin position="32"/>
        <end position="38"/>
    </location>
</feature>
<feature type="strand" evidence="3">
    <location>
        <begin position="45"/>
        <end position="47"/>
    </location>
</feature>
<feature type="helix" evidence="2">
    <location>
        <begin position="53"/>
        <end position="64"/>
    </location>
</feature>
<feature type="strand" evidence="2">
    <location>
        <begin position="70"/>
        <end position="72"/>
    </location>
</feature>
<feature type="helix" evidence="2">
    <location>
        <begin position="76"/>
        <end position="78"/>
    </location>
</feature>
<feature type="strand" evidence="3">
    <location>
        <begin position="79"/>
        <end position="81"/>
    </location>
</feature>
<feature type="helix" evidence="2">
    <location>
        <begin position="85"/>
        <end position="95"/>
    </location>
</feature>
<feature type="strand" evidence="2">
    <location>
        <begin position="100"/>
        <end position="106"/>
    </location>
</feature>
<feature type="helix" evidence="2">
    <location>
        <begin position="107"/>
        <end position="112"/>
    </location>
</feature>
<feature type="helix" evidence="2">
    <location>
        <begin position="113"/>
        <end position="115"/>
    </location>
</feature>
<feature type="helix" evidence="2">
    <location>
        <begin position="119"/>
        <end position="122"/>
    </location>
</feature>
<feature type="turn" evidence="2">
    <location>
        <begin position="123"/>
        <end position="125"/>
    </location>
</feature>
<feature type="strand" evidence="2">
    <location>
        <begin position="127"/>
        <end position="131"/>
    </location>
</feature>
<feature type="strand" evidence="2">
    <location>
        <begin position="145"/>
        <end position="147"/>
    </location>
</feature>
<feature type="helix" evidence="2">
    <location>
        <begin position="156"/>
        <end position="164"/>
    </location>
</feature>
<feature type="turn" evidence="2">
    <location>
        <begin position="170"/>
        <end position="172"/>
    </location>
</feature>
<feature type="helix" evidence="2">
    <location>
        <begin position="175"/>
        <end position="183"/>
    </location>
</feature>
<feature type="helix" evidence="2">
    <location>
        <begin position="186"/>
        <end position="188"/>
    </location>
</feature>
<protein>
    <recommendedName>
        <fullName evidence="1">Probable nicotinate-nucleotide adenylyltransferase</fullName>
        <ecNumber evidence="1">2.7.7.18</ecNumber>
    </recommendedName>
    <alternativeName>
        <fullName evidence="1">Deamido-NAD(+) diphosphorylase</fullName>
    </alternativeName>
    <alternativeName>
        <fullName evidence="1">Deamido-NAD(+) pyrophosphorylase</fullName>
    </alternativeName>
    <alternativeName>
        <fullName evidence="1">Nicotinate mononucleotide adenylyltransferase</fullName>
        <shortName evidence="1">NaMN adenylyltransferase</shortName>
    </alternativeName>
</protein>
<accession>C3L5T6</accession>
<sequence>MRKIGIIGGTFDPPHYGHLLIANEVYHALNLEEVWFLPNQIPPHKQGRNITSVESRLQMLELATEAEEHFSICLEELSRKGPSYTYDTMLQLTKKYPDVQFHFIIGGDMVEYLPKWYNIEALLDLVTFVGVARPGYKLRTPYPITTVEIPEFAVSSSLLRERYKEKKTCKYLLPEKVQVYIERNGLYES</sequence>